<feature type="chain" id="PRO_1000071081" description="Elongation factor 1-beta">
    <location>
        <begin position="1"/>
        <end position="91"/>
    </location>
</feature>
<organism>
    <name type="scientific">Metallosphaera sedula (strain ATCC 51363 / DSM 5348 / JCM 9185 / NBRC 15509 / TH2)</name>
    <dbReference type="NCBI Taxonomy" id="399549"/>
    <lineage>
        <taxon>Archaea</taxon>
        <taxon>Thermoproteota</taxon>
        <taxon>Thermoprotei</taxon>
        <taxon>Sulfolobales</taxon>
        <taxon>Sulfolobaceae</taxon>
        <taxon>Metallosphaera</taxon>
    </lineage>
</organism>
<comment type="function">
    <text evidence="1">Promotes the exchange of GDP for GTP in EF-1-alpha/GDP, thus allowing the regeneration of EF-1-alpha/GTP that could then be used to form the ternary complex EF-1-alpha/GTP/AAtRNA.</text>
</comment>
<comment type="similarity">
    <text evidence="1">Belongs to the EF-1-beta/EF-1-delta family.</text>
</comment>
<protein>
    <recommendedName>
        <fullName evidence="1">Elongation factor 1-beta</fullName>
        <shortName evidence="1">EF-1-beta</shortName>
    </recommendedName>
    <alternativeName>
        <fullName evidence="1">aEF-1beta</fullName>
    </alternativeName>
</protein>
<accession>A4YD84</accession>
<evidence type="ECO:0000255" key="1">
    <source>
        <dbReference type="HAMAP-Rule" id="MF_00043"/>
    </source>
</evidence>
<sequence length="91" mass="9882">MTDVMVVLKVFPEGDETDLEKVANELVSKLPEGYKLVRKETEPIAFGLKALVVYVSMPEKTEGGTDTLEELASSIEGVSHAEVVGITRLGF</sequence>
<gene>
    <name evidence="1" type="primary">ef1b</name>
    <name type="ordered locus">Msed_0209</name>
</gene>
<name>EF1B_METS5</name>
<proteinExistence type="inferred from homology"/>
<keyword id="KW-0251">Elongation factor</keyword>
<keyword id="KW-0648">Protein biosynthesis</keyword>
<keyword id="KW-1185">Reference proteome</keyword>
<reference key="1">
    <citation type="journal article" date="2008" name="Appl. Environ. Microbiol.">
        <title>The genome sequence of the metal-mobilizing, extremely thermoacidophilic archaeon Metallosphaera sedula provides insights into bioleaching-associated metabolism.</title>
        <authorList>
            <person name="Auernik K.S."/>
            <person name="Maezato Y."/>
            <person name="Blum P.H."/>
            <person name="Kelly R.M."/>
        </authorList>
    </citation>
    <scope>NUCLEOTIDE SEQUENCE [LARGE SCALE GENOMIC DNA]</scope>
    <source>
        <strain>ATCC 51363 / DSM 5348 / JCM 9185 / NBRC 15509 / TH2</strain>
    </source>
</reference>
<dbReference type="EMBL" id="CP000682">
    <property type="protein sequence ID" value="ABP94386.1"/>
    <property type="molecule type" value="Genomic_DNA"/>
</dbReference>
<dbReference type="RefSeq" id="WP_011921354.1">
    <property type="nucleotide sequence ID" value="NZ_CP139956.1"/>
</dbReference>
<dbReference type="SMR" id="A4YD84"/>
<dbReference type="STRING" id="399549.Msed_0209"/>
<dbReference type="KEGG" id="mse:Msed_0209"/>
<dbReference type="eggNOG" id="arCOG01988">
    <property type="taxonomic scope" value="Archaea"/>
</dbReference>
<dbReference type="HOGENOM" id="CLU_165896_1_0_2"/>
<dbReference type="Proteomes" id="UP000000242">
    <property type="component" value="Chromosome"/>
</dbReference>
<dbReference type="GO" id="GO:0003746">
    <property type="term" value="F:translation elongation factor activity"/>
    <property type="evidence" value="ECO:0007669"/>
    <property type="project" value="UniProtKB-UniRule"/>
</dbReference>
<dbReference type="CDD" id="cd00292">
    <property type="entry name" value="EF1B"/>
    <property type="match status" value="1"/>
</dbReference>
<dbReference type="Gene3D" id="3.30.70.60">
    <property type="match status" value="1"/>
</dbReference>
<dbReference type="HAMAP" id="MF_00043">
    <property type="entry name" value="EF1_beta"/>
    <property type="match status" value="1"/>
</dbReference>
<dbReference type="InterPro" id="IPR036219">
    <property type="entry name" value="eEF-1beta-like_sf"/>
</dbReference>
<dbReference type="InterPro" id="IPR014038">
    <property type="entry name" value="EF1B_bsu/dsu_GNE"/>
</dbReference>
<dbReference type="InterPro" id="IPR014717">
    <property type="entry name" value="Transl_elong_EF1B/ribsomal_bS6"/>
</dbReference>
<dbReference type="InterPro" id="IPR004542">
    <property type="entry name" value="Transl_elong_EF1B_B_arc"/>
</dbReference>
<dbReference type="NCBIfam" id="TIGR00489">
    <property type="entry name" value="aEF-1_beta"/>
    <property type="match status" value="1"/>
</dbReference>
<dbReference type="NCBIfam" id="NF001670">
    <property type="entry name" value="PRK00435.1"/>
    <property type="match status" value="1"/>
</dbReference>
<dbReference type="PANTHER" id="PTHR39647">
    <property type="entry name" value="ELONGATION FACTOR 1-BETA"/>
    <property type="match status" value="1"/>
</dbReference>
<dbReference type="PANTHER" id="PTHR39647:SF1">
    <property type="entry name" value="ELONGATION FACTOR 1-BETA"/>
    <property type="match status" value="1"/>
</dbReference>
<dbReference type="Pfam" id="PF00736">
    <property type="entry name" value="EF1_GNE"/>
    <property type="match status" value="1"/>
</dbReference>
<dbReference type="PIRSF" id="PIRSF006521">
    <property type="entry name" value="Transl_elong_EF1B_B_arc"/>
    <property type="match status" value="1"/>
</dbReference>
<dbReference type="SMART" id="SM00888">
    <property type="entry name" value="EF1_GNE"/>
    <property type="match status" value="1"/>
</dbReference>
<dbReference type="SUPFAM" id="SSF54984">
    <property type="entry name" value="eEF-1beta-like"/>
    <property type="match status" value="1"/>
</dbReference>